<proteinExistence type="inferred from homology"/>
<comment type="function">
    <text evidence="1">Catalyzes the interconversion of 2-phosphoglycerate and 3-phosphoglycerate.</text>
</comment>
<comment type="catalytic activity">
    <reaction evidence="1">
        <text>(2R)-2-phosphoglycerate = (2R)-3-phosphoglycerate</text>
        <dbReference type="Rhea" id="RHEA:15901"/>
        <dbReference type="ChEBI" id="CHEBI:58272"/>
        <dbReference type="ChEBI" id="CHEBI:58289"/>
        <dbReference type="EC" id="5.4.2.11"/>
    </reaction>
</comment>
<comment type="pathway">
    <text evidence="1">Carbohydrate degradation; glycolysis; pyruvate from D-glyceraldehyde 3-phosphate: step 3/5.</text>
</comment>
<comment type="subunit">
    <text evidence="1">Homodimer.</text>
</comment>
<comment type="similarity">
    <text evidence="1">Belongs to the phosphoglycerate mutase family. BPG-dependent PGAM subfamily.</text>
</comment>
<reference key="1">
    <citation type="submission" date="2006-03" db="EMBL/GenBank/DDBJ databases">
        <title>Complete sequence of chromosome of Nitrobacter hamburgensis X14.</title>
        <authorList>
            <consortium name="US DOE Joint Genome Institute"/>
            <person name="Copeland A."/>
            <person name="Lucas S."/>
            <person name="Lapidus A."/>
            <person name="Barry K."/>
            <person name="Detter J.C."/>
            <person name="Glavina del Rio T."/>
            <person name="Hammon N."/>
            <person name="Israni S."/>
            <person name="Dalin E."/>
            <person name="Tice H."/>
            <person name="Pitluck S."/>
            <person name="Chain P."/>
            <person name="Malfatti S."/>
            <person name="Shin M."/>
            <person name="Vergez L."/>
            <person name="Schmutz J."/>
            <person name="Larimer F."/>
            <person name="Land M."/>
            <person name="Hauser L."/>
            <person name="Kyrpides N."/>
            <person name="Ivanova N."/>
            <person name="Ward B."/>
            <person name="Arp D."/>
            <person name="Klotz M."/>
            <person name="Stein L."/>
            <person name="O'Mullan G."/>
            <person name="Starkenburg S."/>
            <person name="Sayavedra L."/>
            <person name="Poret-Peterson A.T."/>
            <person name="Gentry M.E."/>
            <person name="Bruce D."/>
            <person name="Richardson P."/>
        </authorList>
    </citation>
    <scope>NUCLEOTIDE SEQUENCE [LARGE SCALE GENOMIC DNA]</scope>
    <source>
        <strain>DSM 10229 / NCIMB 13809 / X14</strain>
    </source>
</reference>
<keyword id="KW-0312">Gluconeogenesis</keyword>
<keyword id="KW-0324">Glycolysis</keyword>
<keyword id="KW-0413">Isomerase</keyword>
<keyword id="KW-1185">Reference proteome</keyword>
<protein>
    <recommendedName>
        <fullName evidence="1">2,3-bisphosphoglycerate-dependent phosphoglycerate mutase</fullName>
        <shortName evidence="1">BPG-dependent PGAM</shortName>
        <shortName evidence="1">PGAM</shortName>
        <shortName evidence="1">Phosphoglyceromutase</shortName>
        <shortName evidence="1">dPGM</shortName>
        <ecNumber evidence="1">5.4.2.11</ecNumber>
    </recommendedName>
</protein>
<dbReference type="EC" id="5.4.2.11" evidence="1"/>
<dbReference type="EMBL" id="CP000319">
    <property type="protein sequence ID" value="ABE61060.1"/>
    <property type="molecule type" value="Genomic_DNA"/>
</dbReference>
<dbReference type="RefSeq" id="WP_011508766.1">
    <property type="nucleotide sequence ID" value="NC_007964.1"/>
</dbReference>
<dbReference type="SMR" id="Q1QRT7"/>
<dbReference type="STRING" id="323097.Nham_0159"/>
<dbReference type="KEGG" id="nha:Nham_0159"/>
<dbReference type="eggNOG" id="COG0588">
    <property type="taxonomic scope" value="Bacteria"/>
</dbReference>
<dbReference type="HOGENOM" id="CLU_033323_1_4_5"/>
<dbReference type="OrthoDB" id="9781415at2"/>
<dbReference type="UniPathway" id="UPA00109">
    <property type="reaction ID" value="UER00186"/>
</dbReference>
<dbReference type="Proteomes" id="UP000001953">
    <property type="component" value="Chromosome"/>
</dbReference>
<dbReference type="GO" id="GO:0004619">
    <property type="term" value="F:phosphoglycerate mutase activity"/>
    <property type="evidence" value="ECO:0007669"/>
    <property type="project" value="UniProtKB-EC"/>
</dbReference>
<dbReference type="GO" id="GO:0006094">
    <property type="term" value="P:gluconeogenesis"/>
    <property type="evidence" value="ECO:0007669"/>
    <property type="project" value="UniProtKB-UniRule"/>
</dbReference>
<dbReference type="GO" id="GO:0006096">
    <property type="term" value="P:glycolytic process"/>
    <property type="evidence" value="ECO:0007669"/>
    <property type="project" value="UniProtKB-UniRule"/>
</dbReference>
<dbReference type="CDD" id="cd07067">
    <property type="entry name" value="HP_PGM_like"/>
    <property type="match status" value="1"/>
</dbReference>
<dbReference type="Gene3D" id="3.40.50.1240">
    <property type="entry name" value="Phosphoglycerate mutase-like"/>
    <property type="match status" value="1"/>
</dbReference>
<dbReference type="HAMAP" id="MF_01039">
    <property type="entry name" value="PGAM_GpmA"/>
    <property type="match status" value="1"/>
</dbReference>
<dbReference type="InterPro" id="IPR013078">
    <property type="entry name" value="His_Pase_superF_clade-1"/>
</dbReference>
<dbReference type="InterPro" id="IPR029033">
    <property type="entry name" value="His_PPase_superfam"/>
</dbReference>
<dbReference type="InterPro" id="IPR001345">
    <property type="entry name" value="PG/BPGM_mutase_AS"/>
</dbReference>
<dbReference type="InterPro" id="IPR005952">
    <property type="entry name" value="Phosphogly_mut1"/>
</dbReference>
<dbReference type="NCBIfam" id="TIGR01258">
    <property type="entry name" value="pgm_1"/>
    <property type="match status" value="1"/>
</dbReference>
<dbReference type="NCBIfam" id="NF002339">
    <property type="entry name" value="PRK01295.1"/>
    <property type="match status" value="1"/>
</dbReference>
<dbReference type="PANTHER" id="PTHR11931">
    <property type="entry name" value="PHOSPHOGLYCERATE MUTASE"/>
    <property type="match status" value="1"/>
</dbReference>
<dbReference type="Pfam" id="PF00300">
    <property type="entry name" value="His_Phos_1"/>
    <property type="match status" value="1"/>
</dbReference>
<dbReference type="SMART" id="SM00855">
    <property type="entry name" value="PGAM"/>
    <property type="match status" value="1"/>
</dbReference>
<dbReference type="SUPFAM" id="SSF53254">
    <property type="entry name" value="Phosphoglycerate mutase-like"/>
    <property type="match status" value="1"/>
</dbReference>
<dbReference type="PROSITE" id="PS00175">
    <property type="entry name" value="PG_MUTASE"/>
    <property type="match status" value="1"/>
</dbReference>
<feature type="chain" id="PRO_1000064082" description="2,3-bisphosphoglycerate-dependent phosphoglycerate mutase">
    <location>
        <begin position="1"/>
        <end position="207"/>
    </location>
</feature>
<feature type="active site" description="Tele-phosphohistidine intermediate" evidence="1">
    <location>
        <position position="11"/>
    </location>
</feature>
<feature type="active site" description="Proton donor/acceptor" evidence="1">
    <location>
        <position position="89"/>
    </location>
</feature>
<feature type="binding site" evidence="1">
    <location>
        <begin position="10"/>
        <end position="17"/>
    </location>
    <ligand>
        <name>substrate</name>
    </ligand>
</feature>
<feature type="binding site" evidence="1">
    <location>
        <begin position="23"/>
        <end position="24"/>
    </location>
    <ligand>
        <name>substrate</name>
    </ligand>
</feature>
<feature type="binding site" evidence="1">
    <location>
        <position position="62"/>
    </location>
    <ligand>
        <name>substrate</name>
    </ligand>
</feature>
<feature type="binding site" evidence="1">
    <location>
        <begin position="89"/>
        <end position="92"/>
    </location>
    <ligand>
        <name>substrate</name>
    </ligand>
</feature>
<feature type="binding site" evidence="1">
    <location>
        <position position="100"/>
    </location>
    <ligand>
        <name>substrate</name>
    </ligand>
</feature>
<feature type="binding site" evidence="1">
    <location>
        <begin position="116"/>
        <end position="117"/>
    </location>
    <ligand>
        <name>substrate</name>
    </ligand>
</feature>
<feature type="binding site" evidence="1">
    <location>
        <begin position="160"/>
        <end position="161"/>
    </location>
    <ligand>
        <name>substrate</name>
    </ligand>
</feature>
<feature type="site" description="Transition state stabilizer" evidence="1">
    <location>
        <position position="159"/>
    </location>
</feature>
<accession>Q1QRT7</accession>
<gene>
    <name evidence="1" type="primary">gpmA</name>
    <name type="ordered locus">Nham_0159</name>
</gene>
<sequence length="207" mass="23061">MSERLLVLVRHGQSEWNLKNLFTGWKDPDLTELGVTEAKDAGRKLKEQGFAFDIAFTSVLIRAEHTLDLVLEELGQTGIPVRKDLALNERDYGDLAGLNKDEARKKWGEEQVLIWRRSYDVPPPGGESLKDTLARTLPYFVQEILPCVLRGECTLVAAHGNSLRALVMVLEKLSPEQILKRELATGAPVIYRLNADATVASKLDLAA</sequence>
<name>GPMA_NITHX</name>
<organism>
    <name type="scientific">Nitrobacter hamburgensis (strain DSM 10229 / NCIMB 13809 / X14)</name>
    <dbReference type="NCBI Taxonomy" id="323097"/>
    <lineage>
        <taxon>Bacteria</taxon>
        <taxon>Pseudomonadati</taxon>
        <taxon>Pseudomonadota</taxon>
        <taxon>Alphaproteobacteria</taxon>
        <taxon>Hyphomicrobiales</taxon>
        <taxon>Nitrobacteraceae</taxon>
        <taxon>Nitrobacter</taxon>
    </lineage>
</organism>
<evidence type="ECO:0000255" key="1">
    <source>
        <dbReference type="HAMAP-Rule" id="MF_01039"/>
    </source>
</evidence>